<feature type="initiator methionine" description="Removed" evidence="1">
    <location>
        <position position="1"/>
    </location>
</feature>
<feature type="chain" id="PRO_0000191773" description="UDP-N-acetylglucosamine--peptide N-acetylglucosaminyltransferase 110 kDa subunit">
    <location>
        <begin position="2"/>
        <end position="1046"/>
    </location>
</feature>
<feature type="repeat" description="TPR 1">
    <location>
        <begin position="21"/>
        <end position="54"/>
    </location>
</feature>
<feature type="repeat" description="TPR 2">
    <location>
        <begin position="89"/>
        <end position="122"/>
    </location>
</feature>
<feature type="repeat" description="TPR 3">
    <location>
        <begin position="123"/>
        <end position="156"/>
    </location>
</feature>
<feature type="repeat" description="TPR 4">
    <location>
        <begin position="157"/>
        <end position="190"/>
    </location>
</feature>
<feature type="repeat" description="TPR 5">
    <location>
        <begin position="191"/>
        <end position="224"/>
    </location>
</feature>
<feature type="repeat" description="TPR 6">
    <location>
        <begin position="225"/>
        <end position="258"/>
    </location>
</feature>
<feature type="repeat" description="TPR 7">
    <location>
        <begin position="259"/>
        <end position="292"/>
    </location>
</feature>
<feature type="repeat" description="TPR 8">
    <location>
        <begin position="293"/>
        <end position="326"/>
    </location>
</feature>
<feature type="repeat" description="TPR 9">
    <location>
        <begin position="327"/>
        <end position="360"/>
    </location>
</feature>
<feature type="repeat" description="TPR 10">
    <location>
        <begin position="361"/>
        <end position="394"/>
    </location>
</feature>
<feature type="repeat" description="TPR 11">
    <location>
        <begin position="395"/>
        <end position="428"/>
    </location>
</feature>
<feature type="repeat" description="TPR 12">
    <location>
        <begin position="429"/>
        <end position="462"/>
    </location>
</feature>
<feature type="repeat" description="TPR 13; truncated">
    <location>
        <begin position="463"/>
        <end position="473"/>
    </location>
</feature>
<feature type="region of interest" description="Required for phosphatidylinositol 3,4,5-triphosphate binding" evidence="2">
    <location>
        <begin position="991"/>
        <end position="1010"/>
    </location>
</feature>
<feature type="short sequence motif" description="DFP motif" evidence="1">
    <location>
        <begin position="464"/>
        <end position="466"/>
    </location>
</feature>
<feature type="short sequence motif" description="Nuclear localization signal" evidence="4">
    <location>
        <begin position="487"/>
        <end position="503"/>
    </location>
</feature>
<feature type="active site" description="Proton acceptor" evidence="1">
    <location>
        <position position="508"/>
    </location>
</feature>
<feature type="binding site" evidence="1">
    <location>
        <position position="849"/>
    </location>
    <ligand>
        <name>UDP</name>
        <dbReference type="ChEBI" id="CHEBI:58223"/>
    </ligand>
</feature>
<feature type="binding site" evidence="1">
    <location>
        <position position="852"/>
    </location>
    <ligand>
        <name>UDP</name>
        <dbReference type="ChEBI" id="CHEBI:58223"/>
    </ligand>
</feature>
<feature type="binding site" evidence="1">
    <location>
        <begin position="906"/>
        <end position="908"/>
    </location>
    <ligand>
        <name>UDP</name>
        <dbReference type="ChEBI" id="CHEBI:58223"/>
    </ligand>
</feature>
<feature type="binding site" evidence="1">
    <location>
        <begin position="911"/>
        <end position="914"/>
    </location>
    <ligand>
        <name>UDP</name>
        <dbReference type="ChEBI" id="CHEBI:58223"/>
    </ligand>
</feature>
<feature type="binding site" evidence="1">
    <location>
        <begin position="930"/>
        <end position="932"/>
    </location>
    <ligand>
        <name>UDP</name>
        <dbReference type="ChEBI" id="CHEBI:58223"/>
    </ligand>
</feature>
<feature type="binding site" evidence="1">
    <location>
        <position position="935"/>
    </location>
    <ligand>
        <name>UDP</name>
        <dbReference type="ChEBI" id="CHEBI:58223"/>
    </ligand>
</feature>
<feature type="modified residue" description="N-acetylalanine" evidence="1">
    <location>
        <position position="2"/>
    </location>
</feature>
<feature type="modified residue" description="Phosphoserine; by GSK3-beta; alternate" evidence="3">
    <location>
        <position position="3"/>
    </location>
</feature>
<feature type="modified residue" description="Phosphoserine; by GSK3-beta; alternate" evidence="3">
    <location>
        <position position="4"/>
    </location>
</feature>
<feature type="modified residue" description="Phosphoserine" evidence="1">
    <location>
        <position position="20"/>
    </location>
</feature>
<feature type="modified residue" description="Phosphothreonine" evidence="1">
    <location>
        <position position="454"/>
    </location>
</feature>
<feature type="modified residue" description="Phosphotyrosine" evidence="2">
    <location>
        <position position="989"/>
    </location>
</feature>
<feature type="glycosylation site" description="O-linked (GlcNAc) serine; alternate" evidence="3">
    <location>
        <position position="3"/>
    </location>
</feature>
<feature type="glycosylation site" description="O-linked (GlcNAc) serine; alternate" evidence="3">
    <location>
        <position position="4"/>
    </location>
</feature>
<feature type="glycosylation site" description="O-linked (GlcNAc) serine; by autocatalysis" evidence="1">
    <location>
        <position position="399"/>
    </location>
</feature>
<gene>
    <name type="primary">OGT</name>
</gene>
<keyword id="KW-0007">Acetylation</keyword>
<keyword id="KW-0090">Biological rhythms</keyword>
<keyword id="KW-0156">Chromatin regulator</keyword>
<keyword id="KW-0963">Cytoplasm</keyword>
<keyword id="KW-0903">Direct protein sequencing</keyword>
<keyword id="KW-0325">Glycoprotein</keyword>
<keyword id="KW-0328">Glycosyltransferase</keyword>
<keyword id="KW-0446">Lipid-binding</keyword>
<keyword id="KW-0539">Nucleus</keyword>
<keyword id="KW-0597">Phosphoprotein</keyword>
<keyword id="KW-1185">Reference proteome</keyword>
<keyword id="KW-0677">Repeat</keyword>
<keyword id="KW-0802">TPR repeat</keyword>
<keyword id="KW-0808">Transferase</keyword>
<keyword id="KW-0832">Ubl conjugation</keyword>
<protein>
    <recommendedName>
        <fullName>UDP-N-acetylglucosamine--peptide N-acetylglucosaminyltransferase 110 kDa subunit</fullName>
        <ecNumber evidence="5">2.4.1.255</ecNumber>
    </recommendedName>
    <alternativeName>
        <fullName>O-GlcNAc transferase subunit p110</fullName>
    </alternativeName>
    <alternativeName>
        <fullName>O-linked N-acetylglucosamine transferase 110 kDa subunit</fullName>
        <shortName>OGT</shortName>
    </alternativeName>
</protein>
<reference key="1">
    <citation type="submission" date="2009-08" db="EMBL/GenBank/DDBJ databases">
        <title>Genome Sequence of Oryctolagus cuniculus (European rabbit).</title>
        <authorList>
            <consortium name="The Genome Sequencing Platform"/>
            <person name="Di Palma F."/>
            <person name="Heiman D."/>
            <person name="Young S."/>
            <person name="Gnerre S."/>
            <person name="Johnson J."/>
            <person name="Lander E.S."/>
            <person name="Lindblad-Toh K."/>
        </authorList>
    </citation>
    <scope>NUCLEOTIDE SEQUENCE [LARGE SCALE GENOMIC DNA]</scope>
    <source>
        <strain>Thorbecke</strain>
    </source>
</reference>
<reference key="2">
    <citation type="journal article" date="1997" name="J. Biol. Chem.">
        <title>O-linked GlcNAc transferase is a conserved nucleocytoplasmic protein containing tetratricopeptide repeats.</title>
        <authorList>
            <person name="Lubas W.A."/>
            <person name="Frank D.W."/>
            <person name="Krause M."/>
            <person name="Hanover J.A."/>
        </authorList>
    </citation>
    <scope>PROTEIN SEQUENCE OF 217-239 AND 958-971</scope>
    <source>
        <tissue>Blood</tissue>
    </source>
</reference>
<reference key="3">
    <citation type="journal article" date="1990" name="J. Biol. Chem.">
        <title>Enzymatic addition of O-GlcNAc to nuclear and cytoplasmic proteins. Identification of a uridine diphospho-N-acetylglucosamine:peptide beta-N-acetylglucosaminyltransferase.</title>
        <authorList>
            <person name="Haltiwanger R.S."/>
            <person name="Holt G.D."/>
            <person name="Hart G.W."/>
        </authorList>
    </citation>
    <scope>FUNCTION</scope>
    <scope>CATALYTIC ACTIVITY</scope>
    <scope>ACTIVITY REGULATION</scope>
    <scope>PATHWAY</scope>
    <source>
        <tissue>Reticulocyte</tissue>
    </source>
</reference>
<dbReference type="EC" id="2.4.1.255" evidence="5"/>
<dbReference type="RefSeq" id="XP_002720149.1">
    <property type="nucleotide sequence ID" value="XM_002720103.5"/>
</dbReference>
<dbReference type="SMR" id="P81436"/>
<dbReference type="FunCoup" id="P81436">
    <property type="interactions" value="1296"/>
</dbReference>
<dbReference type="STRING" id="9986.ENSOCUP00000044823"/>
<dbReference type="GlyCosmos" id="P81436">
    <property type="glycosylation" value="2 sites, No reported glycans"/>
</dbReference>
<dbReference type="iPTMnet" id="P81436"/>
<dbReference type="PaxDb" id="9986-ENSOCUP00000014582"/>
<dbReference type="Ensembl" id="ENSOCUT00000016973.3">
    <property type="protein sequence ID" value="ENSOCUP00000014582.2"/>
    <property type="gene ID" value="ENSOCUG00000016965.3"/>
</dbReference>
<dbReference type="GeneID" id="100354727"/>
<dbReference type="KEGG" id="ocu:100354727"/>
<dbReference type="CTD" id="8473"/>
<dbReference type="eggNOG" id="KOG1124">
    <property type="taxonomic scope" value="Eukaryota"/>
</dbReference>
<dbReference type="eggNOG" id="KOG4626">
    <property type="taxonomic scope" value="Eukaryota"/>
</dbReference>
<dbReference type="GeneTree" id="ENSGT00940000155085"/>
<dbReference type="HOGENOM" id="CLU_001721_1_0_1"/>
<dbReference type="InParanoid" id="P81436"/>
<dbReference type="OMA" id="MNESEHF"/>
<dbReference type="OrthoDB" id="9991317at2759"/>
<dbReference type="TreeFam" id="TF105785"/>
<dbReference type="UniPathway" id="UPA00378"/>
<dbReference type="Proteomes" id="UP000001811">
    <property type="component" value="Chromosome X"/>
</dbReference>
<dbReference type="Bgee" id="ENSOCUG00000016965">
    <property type="expression patterns" value="Expressed in upper lobe of left lung and 14 other cell types or tissues"/>
</dbReference>
<dbReference type="GO" id="GO:0005737">
    <property type="term" value="C:cytoplasm"/>
    <property type="evidence" value="ECO:0007669"/>
    <property type="project" value="UniProtKB-SubCell"/>
</dbReference>
<dbReference type="GO" id="GO:0000123">
    <property type="term" value="C:histone acetyltransferase complex"/>
    <property type="evidence" value="ECO:0000250"/>
    <property type="project" value="UniProtKB"/>
</dbReference>
<dbReference type="GO" id="GO:0005634">
    <property type="term" value="C:nucleus"/>
    <property type="evidence" value="ECO:0007669"/>
    <property type="project" value="UniProtKB-SubCell"/>
</dbReference>
<dbReference type="GO" id="GO:0005886">
    <property type="term" value="C:plasma membrane"/>
    <property type="evidence" value="ECO:0000250"/>
    <property type="project" value="UniProtKB"/>
</dbReference>
<dbReference type="GO" id="GO:0017122">
    <property type="term" value="C:protein N-acetylglucosaminyltransferase complex"/>
    <property type="evidence" value="ECO:0000314"/>
    <property type="project" value="UniProtKB"/>
</dbReference>
<dbReference type="GO" id="GO:0005547">
    <property type="term" value="F:phosphatidylinositol-3,4,5-trisphosphate binding"/>
    <property type="evidence" value="ECO:0000250"/>
    <property type="project" value="UniProtKB"/>
</dbReference>
<dbReference type="GO" id="GO:0097363">
    <property type="term" value="F:protein O-acetylglucosaminyltransferase activity"/>
    <property type="evidence" value="ECO:0000250"/>
    <property type="project" value="UniProtKB"/>
</dbReference>
<dbReference type="GO" id="GO:0006915">
    <property type="term" value="P:apoptotic process"/>
    <property type="evidence" value="ECO:0000250"/>
    <property type="project" value="UniProtKB"/>
</dbReference>
<dbReference type="GO" id="GO:0071333">
    <property type="term" value="P:cellular response to glucose stimulus"/>
    <property type="evidence" value="ECO:0000250"/>
    <property type="project" value="UniProtKB"/>
</dbReference>
<dbReference type="GO" id="GO:0006325">
    <property type="term" value="P:chromatin organization"/>
    <property type="evidence" value="ECO:0007669"/>
    <property type="project" value="UniProtKB-KW"/>
</dbReference>
<dbReference type="GO" id="GO:0032922">
    <property type="term" value="P:circadian regulation of gene expression"/>
    <property type="evidence" value="ECO:0000250"/>
    <property type="project" value="UniProtKB"/>
</dbReference>
<dbReference type="GO" id="GO:0160076">
    <property type="term" value="P:negative regulation of non-canonical inflammasome complex assembly"/>
    <property type="evidence" value="ECO:0000250"/>
    <property type="project" value="UniProtKB"/>
</dbReference>
<dbReference type="GO" id="GO:0031397">
    <property type="term" value="P:negative regulation of protein ubiquitination"/>
    <property type="evidence" value="ECO:0000250"/>
    <property type="project" value="UniProtKB"/>
</dbReference>
<dbReference type="GO" id="GO:1904263">
    <property type="term" value="P:positive regulation of TORC1 signaling"/>
    <property type="evidence" value="ECO:0000250"/>
    <property type="project" value="UniProtKB"/>
</dbReference>
<dbReference type="GO" id="GO:0045944">
    <property type="term" value="P:positive regulation of transcription by RNA polymerase II"/>
    <property type="evidence" value="ECO:0000250"/>
    <property type="project" value="UniProtKB"/>
</dbReference>
<dbReference type="GO" id="GO:0006493">
    <property type="term" value="P:protein O-linked glycosylation"/>
    <property type="evidence" value="ECO:0000250"/>
    <property type="project" value="UniProtKB"/>
</dbReference>
<dbReference type="GO" id="GO:0016485">
    <property type="term" value="P:protein processing"/>
    <property type="evidence" value="ECO:0000250"/>
    <property type="project" value="UniProtKB"/>
</dbReference>
<dbReference type="GO" id="GO:0006111">
    <property type="term" value="P:regulation of gluconeogenesis"/>
    <property type="evidence" value="ECO:0000250"/>
    <property type="project" value="UniProtKB"/>
</dbReference>
<dbReference type="GO" id="GO:0006110">
    <property type="term" value="P:regulation of glycolytic process"/>
    <property type="evidence" value="ECO:0000250"/>
    <property type="project" value="UniProtKB"/>
</dbReference>
<dbReference type="FunFam" id="1.25.40.10:FF:000013">
    <property type="entry name" value="UDP-N-acetylglucosamine--peptide N-acetylglucosaminyltransferase 110 kDa subunit"/>
    <property type="match status" value="1"/>
</dbReference>
<dbReference type="FunFam" id="1.25.40.10:FF:000019">
    <property type="entry name" value="UDP-N-acetylglucosamine--peptide N-acetylglucosaminyltransferase 110 kDa subunit"/>
    <property type="match status" value="1"/>
</dbReference>
<dbReference type="FunFam" id="3.30.720.150:FF:000001">
    <property type="entry name" value="UDP-N-acetylglucosamine--peptide N-acetylglucosaminyltransferase 110 kDa subunit"/>
    <property type="match status" value="1"/>
</dbReference>
<dbReference type="FunFam" id="3.40.50.11380:FF:000001">
    <property type="entry name" value="UDP-N-acetylglucosamine--peptide N-acetylglucosaminyltransferase 110 kDa subunit"/>
    <property type="match status" value="1"/>
</dbReference>
<dbReference type="FunFam" id="3.40.50.2000:FF:000012">
    <property type="entry name" value="UDP-N-acetylglucosamine--peptide N-acetylglucosaminyltransferase 110 kDa subunit"/>
    <property type="match status" value="1"/>
</dbReference>
<dbReference type="Gene3D" id="3.30.720.150">
    <property type="match status" value="1"/>
</dbReference>
<dbReference type="Gene3D" id="3.40.50.11380">
    <property type="match status" value="1"/>
</dbReference>
<dbReference type="Gene3D" id="3.40.50.2000">
    <property type="entry name" value="Glycogen Phosphorylase B"/>
    <property type="match status" value="1"/>
</dbReference>
<dbReference type="Gene3D" id="1.25.40.10">
    <property type="entry name" value="Tetratricopeptide repeat domain"/>
    <property type="match status" value="2"/>
</dbReference>
<dbReference type="InterPro" id="IPR037919">
    <property type="entry name" value="OGT"/>
</dbReference>
<dbReference type="InterPro" id="IPR029489">
    <property type="entry name" value="OGT/SEC/SPY_C"/>
</dbReference>
<dbReference type="InterPro" id="IPR011990">
    <property type="entry name" value="TPR-like_helical_dom_sf"/>
</dbReference>
<dbReference type="InterPro" id="IPR019734">
    <property type="entry name" value="TPR_rpt"/>
</dbReference>
<dbReference type="PANTHER" id="PTHR44366">
    <property type="entry name" value="UDP-N-ACETYLGLUCOSAMINE--PEPTIDE N-ACETYLGLUCOSAMINYLTRANSFERASE 110 KDA SUBUNIT"/>
    <property type="match status" value="1"/>
</dbReference>
<dbReference type="PANTHER" id="PTHR44366:SF1">
    <property type="entry name" value="UDP-N-ACETYLGLUCOSAMINE--PEPTIDE N-ACETYLGLUCOSAMINYLTRANSFERASE 110 KDA SUBUNIT"/>
    <property type="match status" value="1"/>
</dbReference>
<dbReference type="Pfam" id="PF13844">
    <property type="entry name" value="Glyco_transf_41"/>
    <property type="match status" value="1"/>
</dbReference>
<dbReference type="Pfam" id="PF00515">
    <property type="entry name" value="TPR_1"/>
    <property type="match status" value="2"/>
</dbReference>
<dbReference type="Pfam" id="PF13414">
    <property type="entry name" value="TPR_11"/>
    <property type="match status" value="3"/>
</dbReference>
<dbReference type="Pfam" id="PF13424">
    <property type="entry name" value="TPR_12"/>
    <property type="match status" value="1"/>
</dbReference>
<dbReference type="Pfam" id="PF13181">
    <property type="entry name" value="TPR_8"/>
    <property type="match status" value="2"/>
</dbReference>
<dbReference type="SMART" id="SM00028">
    <property type="entry name" value="TPR"/>
    <property type="match status" value="12"/>
</dbReference>
<dbReference type="SUPFAM" id="SSF48452">
    <property type="entry name" value="TPR-like"/>
    <property type="match status" value="2"/>
</dbReference>
<dbReference type="PROSITE" id="PS50005">
    <property type="entry name" value="TPR"/>
    <property type="match status" value="12"/>
</dbReference>
<dbReference type="PROSITE" id="PS50293">
    <property type="entry name" value="TPR_REGION"/>
    <property type="match status" value="1"/>
</dbReference>
<accession>P81436</accession>
<accession>G1TCQ9</accession>
<proteinExistence type="evidence at protein level"/>
<comment type="function">
    <text evidence="1 2 3 5">Catalyzes the transfer of a single N-acetylglucosamine from UDP-GlcNAc to a serine or threonine residue in cytoplasmic and nuclear proteins resulting in their modification with a beta-linked N-acetylglucosamine (O-GlcNAc) (PubMed:2137449). Glycosylates a large and diverse number of proteins including histone H2B, AKT1, AMPK, ATG4B, CAPRIN1, EZH2, FNIP1, GSDMD, KRT7, LMNA, LMNB1, LMNB2, RPTOR, HOXA1, PFKL, KMT2E/MLL5, MAPT/TAU, TET2, RBL2, RET, NOD2 and HCFC1 (By similarity). Can regulate their cellular processes via cross-talk between glycosylation and phosphorylation or by affecting proteolytic processing (By similarity). Involved in insulin resistance in muscle and adipocyte cells via glycosylating insulin signaling components and inhibiting the 'Thr-308' phosphorylation of AKT1, enhancing IRS1 phosphorylation and attenuating insulin signaling (By similarity). Involved in glycolysis regulation by mediating glycosylation of 6-phosphofructokinase PFKL, inhibiting its activity (By similarity). Plays a key role in chromatin structure by mediating O-GlcNAcylation of 'Ser-112' of histone H2B: recruited to CpG-rich transcription start sites of active genes via its interaction with TET proteins (TET1, TET2 or TET3) (By similarity). As part of the NSL complex indirectly involved in acetylation of nucleosomal histone H4 on several lysine residues (By similarity). O-GlcNAcylation of 'Ser-75' of EZH2 increases its stability, and facilitating the formation of H3K27me3 by the PRC2/EED-EZH2 complex (By similarity). Stabilizes KMT2E/MLL5 by mediating its glycosylation, thereby preventing KMT2E/MLL5 ubiquitination (By similarity). Regulates circadian oscillation of the clock genes and glucose homeostasis in the liver (By similarity). Stabilizes clock proteins BMAL1 and CLOCK through O-glycosylation, which prevents their ubiquitination and subsequent degradation (By similarity). Promotes the CLOCK-BMAL1-mediated transcription of genes in the negative loop of the circadian clock such as PER1/2 and CRY1/2 (By similarity). O-glycosylates HCFC1 and regulates its proteolytic processing and transcriptional activity (By similarity). Component of a THAP1/THAP3-HCFC1-OGT complex that is required for the regulation of the transcriptional activity of RRM1 (By similarity). Regulates mitochondrial motility in neurons by mediating glycosylation of TRAK1 (By similarity). Promotes autophagy by mediating O-glycosylation of ATG4B (By similarity). Acts as a regulator of mTORC1 signaling by mediating O-glycosylation of RPTOR and FNIP1: O-GlcNAcylation of RPTOR in response to glucose sufficiency promotes activation of the mTORC1 complex (By similarity).</text>
</comment>
<comment type="function">
    <text evidence="1 2 3 5">Catalyzes the transfer of a single N-acetylglucosamine from UDP-GlcNAc to a serine or threonine residue (PubMed:2137449). Acts on cytoplasmic and nuclear proteins resulting in their modification with a beta-linked N-acetylglucosamine (O-GlcNAc). Glycosylates a large and diverse number of proteins including histone H2B, AKT1, ATG4B, EZH2, PFKL, KMT2E/MLL5, MAPT/TAU, NOD2 and HCFC1. Can regulate their cellular processes via cross-talk between glycosylation and phosphorylation or by affecting proteolytic processing. Probably by glycosylating KMT2E/MLL5, stabilizes KMT2E/MLL5 by preventing its ubiquitination (By similarity). Involved in insulin resistance in muscle and adipocyte cells via glycosylating insulin signaling components and inhibiting the 'Thr-308' phosphorylation of AKT1, enhancing IRS1 phosphorylation and attenuating insulin signaling (By similarity). Involved in glycolysis regulation by mediating glycosylation of 6-phosphofructokinase PFKL, inhibiting its activity. Component of a THAP1/THAP3-HCFC1-OGT complex that is required for the regulation of the transcriptional activity of RRM1. Plays a key role in chromatin structure by mediating O-GlcNAcylation of 'Ser-112' of histone H2B: recruited to CpG-rich transcription start sites of active genes via its interaction with TET proteins (TET1, TET2 or TET3). As part of the NSL complex indirectly involved in acetylation of nucleosomal histone H4 on several lysine residues. O-GlcNAcylation of 'Ser-75' of EZH2 increases its stability, and facilitating the formation of H3K27me3 by the PRC2/EED-EZH2 complex. Regulates circadian oscillation of the clock genes and glucose homeostasis in the liver. Stabilizes clock proteins BMAL1 and CLOCK through O-glycosylation, which prevents their ubiquitination and subsequent degradation. Promotes the CLOCK-BMAL1-mediated transcription of genes in the negative loop of the circadian clock such as PER1/2 and CRY1/2. O-glycosylates HCFC1 and regulates its proteolytic processing and transcriptional activity (By similarity). Regulates mitochondrial motility in neurons by mediating glycosylation of TRAK1 (By similarity). Glycosylates HOXA1 (By similarity). O-glycosylates FNIP1 (By similarity). Promotes autophagy by mediating O-glycosylation of ATG4B (By similarity).</text>
</comment>
<comment type="catalytic activity">
    <reaction evidence="7">
        <text>L-seryl-[protein] + UDP-N-acetyl-alpha-D-glucosamine = 3-O-(N-acetyl-beta-D-glucosaminyl)-L-seryl-[protein] + UDP + H(+)</text>
        <dbReference type="Rhea" id="RHEA:48904"/>
        <dbReference type="Rhea" id="RHEA-COMP:9863"/>
        <dbReference type="Rhea" id="RHEA-COMP:12251"/>
        <dbReference type="ChEBI" id="CHEBI:15378"/>
        <dbReference type="ChEBI" id="CHEBI:29999"/>
        <dbReference type="ChEBI" id="CHEBI:57705"/>
        <dbReference type="ChEBI" id="CHEBI:58223"/>
        <dbReference type="ChEBI" id="CHEBI:90838"/>
        <dbReference type="EC" id="2.4.1.255"/>
    </reaction>
</comment>
<comment type="catalytic activity">
    <reaction evidence="7">
        <text>L-threonyl-[protein] + UDP-N-acetyl-alpha-D-glucosamine = 3-O-(N-acetyl-beta-D-glucosaminyl)-L-threonyl-[protein] + UDP + H(+)</text>
        <dbReference type="Rhea" id="RHEA:48908"/>
        <dbReference type="Rhea" id="RHEA-COMP:11060"/>
        <dbReference type="Rhea" id="RHEA-COMP:12252"/>
        <dbReference type="ChEBI" id="CHEBI:15378"/>
        <dbReference type="ChEBI" id="CHEBI:30013"/>
        <dbReference type="ChEBI" id="CHEBI:57705"/>
        <dbReference type="ChEBI" id="CHEBI:58223"/>
        <dbReference type="ChEBI" id="CHEBI:90840"/>
        <dbReference type="EC" id="2.4.1.255"/>
    </reaction>
</comment>
<comment type="activity regulation">
    <text evidence="5">Inhibited by UDP.</text>
</comment>
<comment type="pathway">
    <text evidence="5">Protein modification; protein glycosylation.</text>
</comment>
<comment type="subunit">
    <text evidence="1 2 3">Monomer; may exist in different oligomerization states in cells (By similarity). Homotrimer, oligomerizes via TPR repeats 6 and 7. Trimerization is not necessary for activity in vitro, however it increases affinity for UDP-GlcNAc (By similarity). Component of a THAP1/THAP3-HCFC1-OGT complex. Component of the NSL complex at least composed of MOF/KAT8, KANSL1, KANSL2, KANSL3, MCRS1, PHF20, OGT1/OGT, WDR5 and HCFC1. Found in a complex with KIF5B, RHOT1, RHOT2 and TRAK1 (By similarity). Found in a complex composed of at least SINHCAF, SIN3A, HDAC1, SAP30, RBBP4, OGT and TET1. Component of a complex composed of KMT2E/MLL5, OGT and USP7; the complex stabilizes KMT2E/MLL5, preventing KMT2E/MLL5 ubiquitination and proteasomal-mediated degradation. Interacts (via TPRs 1-6) with SIN3A; the interaction mediates transcriptional repression in parallel with histone deacetylase. Interacts (via TPR 5-6) with TET1, TET2 and TET3 (By similarity). Interacts (via TPR repeats 6 and 7) with ATXN10 (By similarity). Interacts with NSD2 (By similarity). Interacts with PROSER1; this interaction mediates TET2 O-GlcNAcylation and stability by promoting the interaction between OGT and TET2 (By similarity).</text>
</comment>
<comment type="subcellular location">
    <subcellularLocation>
        <location evidence="1">Nucleus</location>
    </subcellularLocation>
    <subcellularLocation>
        <location evidence="1">Cytoplasm</location>
    </subcellularLocation>
    <text evidence="1">Predominantly localizes to the nucleus. Translocates into the nucleus via association with importin KPNA1.</text>
</comment>
<comment type="domain">
    <text evidence="1">The TPR repeat domain is required for substrate binding and oligomerization.</text>
</comment>
<comment type="PTM">
    <text evidence="1">Ubiquitinated by the SCF(FBXO31) complex, leading to its proteasomal degradation.</text>
</comment>
<comment type="PTM">
    <text evidence="1 3">Phosphorylation on Ser-3 or Ser-4 by GSK3-beta positively regulates its activity (By similarity). Phosphorylation at Thr-454 by AMPK promotes nuclear localization (By similarity).</text>
</comment>
<comment type="PTM">
    <text evidence="1">Glycosylated via autocatalysis; O-GlcNAcylation at Ser-399 promotes nuclear localization.</text>
</comment>
<comment type="similarity">
    <text evidence="6">Belongs to the glycosyltransferase 41 family. O-GlcNAc transferase subfamily.</text>
</comment>
<evidence type="ECO:0000250" key="1">
    <source>
        <dbReference type="UniProtKB" id="O15294"/>
    </source>
</evidence>
<evidence type="ECO:0000250" key="2">
    <source>
        <dbReference type="UniProtKB" id="P56558"/>
    </source>
</evidence>
<evidence type="ECO:0000250" key="3">
    <source>
        <dbReference type="UniProtKB" id="Q8CGY8"/>
    </source>
</evidence>
<evidence type="ECO:0000255" key="4"/>
<evidence type="ECO:0000269" key="5">
    <source>
    </source>
</evidence>
<evidence type="ECO:0000305" key="6"/>
<evidence type="ECO:0000305" key="7">
    <source>
    </source>
</evidence>
<name>OGT1_RABIT</name>
<organism>
    <name type="scientific">Oryctolagus cuniculus</name>
    <name type="common">Rabbit</name>
    <dbReference type="NCBI Taxonomy" id="9986"/>
    <lineage>
        <taxon>Eukaryota</taxon>
        <taxon>Metazoa</taxon>
        <taxon>Chordata</taxon>
        <taxon>Craniata</taxon>
        <taxon>Vertebrata</taxon>
        <taxon>Euteleostomi</taxon>
        <taxon>Mammalia</taxon>
        <taxon>Eutheria</taxon>
        <taxon>Euarchontoglires</taxon>
        <taxon>Glires</taxon>
        <taxon>Lagomorpha</taxon>
        <taxon>Leporidae</taxon>
        <taxon>Oryctolagus</taxon>
    </lineage>
</organism>
<sequence length="1046" mass="116939">MASSVGNVADSTEPTKRMLSFQGLAELAHREYQAGDFEAAERHCMQLWRQEPDNTGVLLLLSSIHFQCRRLDRSAHFSTLAIKQNPLLAEAYSNLGNVYKERGQLQEAIEHYRHALRLKPDFIDGYINLAAALVAAGDMEGAVQAYVSALQYNPDLYCVRSDLGNLLKALGRLEEAKACYLKAIETQPNFAVAWSNLGCVFNAQGEIWLAIHHFEKAVTLDPNFLDAYINLGNVLKEARIFDRAVAAYLRALSLSPNHAVVHGNLACVYYEQGLIDLAIDTYRRAIELQPHFPDAYCNLANALKEKGSVAEAEDCYNTALRLCPTHADSLNNLANIKREQGNIEEAVRLYRKALEVFPEFAAAHSNLASVLQQQGKLQEALMHYKEAIRISPTFADAYSNMGNTLKEMQDVQGALQCYTRAIQINPAFADAHSNLASIHKDSGNIPEAIASYRTALKLKPDFPDAYCNLAHCLQIVCDWTDYDERMKKLVSIVADQLEKNRLPSVHPHHSMLYPLSHGFRKAIAERHGNLCLDKINVLHKPPYEHPKDLKLSDGRLRVGYVSSDFGNHPTSHLMQSIPGMHNPDKFEVFCYALSPDDGTNFRVKVMAEANHFIDLSQIPCNGKAADRIHQDGIHILVNMNGYTKGARNELFALRPAPIQAMWLGYPGTSGALFMDYIITDQETSPAEVAEQYSEKLAYMPHTFFIGDHANMFPHLKKKAVIDFKSNGHIYDNRIVLNGIDLKAFLDSLPDVKIVKMKCPDGGDNADSSNTALNMPVIPMNTIAEAVIEMINRGQIQITINGFSISNGLATTQINNKAATGEEVPRTIIVTTRSQYGLPEDAIVYCNFNQLYKIDPSTLQMWANILKRVPNSVLWLLRFPAVGEPNIQQYAQNMGLPQNRIIFSPVAPKEEHVRRGQLADVCLDTPLCNGHTTGMDVLWAGTPMVTMPGETLASRVAASQLTCLGCLELIAKNRQEYEDIAVKLGTDLEYLKKIRGKVWKQRISSPLFNTKQYTMELERLYLQMWEHYAAGNKPDHMIKPVEVTESA</sequence>